<protein>
    <recommendedName>
        <fullName evidence="1">Probable phosphatase YcdX</fullName>
        <ecNumber evidence="1">3.1.3.-</ecNumber>
    </recommendedName>
</protein>
<accession>A7ZYY7</accession>
<sequence length="245" mass="26832">MYPVDLHMHTVASTHAYSTLSDYIAQAKQKGIKLFAITDHGPDMEDAPHHWHFINMRIWPRVVDGVGILRGIEANIKNVDGEIDCSGKMFDSLDLIIAGFHEPVFAPHDKATNTQAMIATIASGNVHIISHPGNPKYEIDVKAVAEAAAKHQVALEINNSSFLHSRKGSEDNCRAVAAAVRDAGGWVALGSDSHTAFTMGEFEECLKILDAVDFPPERILNVSPRRLLNFLESRGMAPIAEFADL</sequence>
<keyword id="KW-0378">Hydrolase</keyword>
<keyword id="KW-0479">Metal-binding</keyword>
<keyword id="KW-0862">Zinc</keyword>
<dbReference type="EC" id="3.1.3.-" evidence="1"/>
<dbReference type="EMBL" id="CP000802">
    <property type="protein sequence ID" value="ABV05491.1"/>
    <property type="molecule type" value="Genomic_DNA"/>
</dbReference>
<dbReference type="RefSeq" id="WP_000283664.1">
    <property type="nucleotide sequence ID" value="NC_009800.1"/>
</dbReference>
<dbReference type="SMR" id="A7ZYY7"/>
<dbReference type="GeneID" id="93776384"/>
<dbReference type="KEGG" id="ecx:EcHS_A1152"/>
<dbReference type="HOGENOM" id="CLU_061999_0_1_6"/>
<dbReference type="GO" id="GO:0005829">
    <property type="term" value="C:cytosol"/>
    <property type="evidence" value="ECO:0007669"/>
    <property type="project" value="TreeGrafter"/>
</dbReference>
<dbReference type="GO" id="GO:0016791">
    <property type="term" value="F:phosphatase activity"/>
    <property type="evidence" value="ECO:0007669"/>
    <property type="project" value="UniProtKB-UniRule"/>
</dbReference>
<dbReference type="GO" id="GO:0008270">
    <property type="term" value="F:zinc ion binding"/>
    <property type="evidence" value="ECO:0007669"/>
    <property type="project" value="UniProtKB-UniRule"/>
</dbReference>
<dbReference type="GO" id="GO:0071978">
    <property type="term" value="P:bacterial-type flagellum-dependent swarming motility"/>
    <property type="evidence" value="ECO:0007669"/>
    <property type="project" value="TreeGrafter"/>
</dbReference>
<dbReference type="CDD" id="cd07437">
    <property type="entry name" value="PHP_HisPPase_Ycdx_like"/>
    <property type="match status" value="1"/>
</dbReference>
<dbReference type="FunFam" id="3.20.20.140:FF:000008">
    <property type="entry name" value="Probable phosphatase YcdX"/>
    <property type="match status" value="1"/>
</dbReference>
<dbReference type="Gene3D" id="3.20.20.140">
    <property type="entry name" value="Metal-dependent hydrolases"/>
    <property type="match status" value="1"/>
</dbReference>
<dbReference type="HAMAP" id="MF_01561">
    <property type="entry name" value="YcdX_phosphat"/>
    <property type="match status" value="1"/>
</dbReference>
<dbReference type="InterPro" id="IPR023710">
    <property type="entry name" value="Phosphatase_YcdX_put"/>
</dbReference>
<dbReference type="InterPro" id="IPR004013">
    <property type="entry name" value="PHP_dom"/>
</dbReference>
<dbReference type="InterPro" id="IPR050243">
    <property type="entry name" value="PHP_phosphatase"/>
</dbReference>
<dbReference type="InterPro" id="IPR003141">
    <property type="entry name" value="Pol/His_phosphatase_N"/>
</dbReference>
<dbReference type="InterPro" id="IPR016195">
    <property type="entry name" value="Pol/histidinol_Pase-like"/>
</dbReference>
<dbReference type="NCBIfam" id="NF006702">
    <property type="entry name" value="PRK09248.1"/>
    <property type="match status" value="1"/>
</dbReference>
<dbReference type="PANTHER" id="PTHR36928">
    <property type="entry name" value="PHOSPHATASE YCDX-RELATED"/>
    <property type="match status" value="1"/>
</dbReference>
<dbReference type="PANTHER" id="PTHR36928:SF1">
    <property type="entry name" value="PHOSPHATASE YCDX-RELATED"/>
    <property type="match status" value="1"/>
</dbReference>
<dbReference type="Pfam" id="PF02811">
    <property type="entry name" value="PHP"/>
    <property type="match status" value="1"/>
</dbReference>
<dbReference type="SMART" id="SM00481">
    <property type="entry name" value="POLIIIAc"/>
    <property type="match status" value="1"/>
</dbReference>
<dbReference type="SUPFAM" id="SSF89550">
    <property type="entry name" value="PHP domain-like"/>
    <property type="match status" value="1"/>
</dbReference>
<feature type="chain" id="PRO_1000069017" description="Probable phosphatase YcdX">
    <location>
        <begin position="1"/>
        <end position="245"/>
    </location>
</feature>
<feature type="binding site" evidence="1">
    <location>
        <position position="7"/>
    </location>
    <ligand>
        <name>Zn(2+)</name>
        <dbReference type="ChEBI" id="CHEBI:29105"/>
        <label>1</label>
    </ligand>
</feature>
<feature type="binding site" evidence="1">
    <location>
        <position position="9"/>
    </location>
    <ligand>
        <name>Zn(2+)</name>
        <dbReference type="ChEBI" id="CHEBI:29105"/>
        <label>1</label>
    </ligand>
</feature>
<feature type="binding site" evidence="1">
    <location>
        <position position="15"/>
    </location>
    <ligand>
        <name>Zn(2+)</name>
        <dbReference type="ChEBI" id="CHEBI:29105"/>
        <label>2</label>
    </ligand>
</feature>
<feature type="binding site" evidence="1">
    <location>
        <position position="40"/>
    </location>
    <ligand>
        <name>Zn(2+)</name>
        <dbReference type="ChEBI" id="CHEBI:29105"/>
        <label>2</label>
    </ligand>
</feature>
<feature type="binding site" evidence="1">
    <location>
        <position position="73"/>
    </location>
    <ligand>
        <name>Zn(2+)</name>
        <dbReference type="ChEBI" id="CHEBI:29105"/>
        <label>1</label>
    </ligand>
</feature>
<feature type="binding site" evidence="1">
    <location>
        <position position="73"/>
    </location>
    <ligand>
        <name>Zn(2+)</name>
        <dbReference type="ChEBI" id="CHEBI:29105"/>
        <label>3</label>
    </ligand>
</feature>
<feature type="binding site" evidence="1">
    <location>
        <position position="101"/>
    </location>
    <ligand>
        <name>Zn(2+)</name>
        <dbReference type="ChEBI" id="CHEBI:29105"/>
        <label>3</label>
    </ligand>
</feature>
<feature type="binding site" evidence="1">
    <location>
        <position position="131"/>
    </location>
    <ligand>
        <name>Zn(2+)</name>
        <dbReference type="ChEBI" id="CHEBI:29105"/>
        <label>3</label>
    </ligand>
</feature>
<feature type="binding site" evidence="1">
    <location>
        <position position="192"/>
    </location>
    <ligand>
        <name>Zn(2+)</name>
        <dbReference type="ChEBI" id="CHEBI:29105"/>
        <label>1</label>
    </ligand>
</feature>
<feature type="binding site" evidence="1">
    <location>
        <position position="194"/>
    </location>
    <ligand>
        <name>Zn(2+)</name>
        <dbReference type="ChEBI" id="CHEBI:29105"/>
        <label>2</label>
    </ligand>
</feature>
<proteinExistence type="inferred from homology"/>
<name>YCDX_ECOHS</name>
<reference key="1">
    <citation type="journal article" date="2008" name="J. Bacteriol.">
        <title>The pangenome structure of Escherichia coli: comparative genomic analysis of E. coli commensal and pathogenic isolates.</title>
        <authorList>
            <person name="Rasko D.A."/>
            <person name="Rosovitz M.J."/>
            <person name="Myers G.S.A."/>
            <person name="Mongodin E.F."/>
            <person name="Fricke W.F."/>
            <person name="Gajer P."/>
            <person name="Crabtree J."/>
            <person name="Sebaihia M."/>
            <person name="Thomson N.R."/>
            <person name="Chaudhuri R."/>
            <person name="Henderson I.R."/>
            <person name="Sperandio V."/>
            <person name="Ravel J."/>
        </authorList>
    </citation>
    <scope>NUCLEOTIDE SEQUENCE [LARGE SCALE GENOMIC DNA]</scope>
    <source>
        <strain>HS</strain>
    </source>
</reference>
<organism>
    <name type="scientific">Escherichia coli O9:H4 (strain HS)</name>
    <dbReference type="NCBI Taxonomy" id="331112"/>
    <lineage>
        <taxon>Bacteria</taxon>
        <taxon>Pseudomonadati</taxon>
        <taxon>Pseudomonadota</taxon>
        <taxon>Gammaproteobacteria</taxon>
        <taxon>Enterobacterales</taxon>
        <taxon>Enterobacteriaceae</taxon>
        <taxon>Escherichia</taxon>
    </lineage>
</organism>
<comment type="cofactor">
    <cofactor evidence="1">
        <name>Zn(2+)</name>
        <dbReference type="ChEBI" id="CHEBI:29105"/>
    </cofactor>
    <text evidence="1">Binds 3 Zn(2+) ions per subunit.</text>
</comment>
<comment type="subunit">
    <text evidence="1">Homotrimer.</text>
</comment>
<comment type="similarity">
    <text evidence="1">Belongs to the PHP family.</text>
</comment>
<evidence type="ECO:0000255" key="1">
    <source>
        <dbReference type="HAMAP-Rule" id="MF_01561"/>
    </source>
</evidence>
<gene>
    <name evidence="1" type="primary">ycdX</name>
    <name type="ordered locus">EcHS_A1152</name>
</gene>